<reference key="1">
    <citation type="journal article" date="2004" name="Proc. Natl. Acad. Sci. U.S.A.">
        <title>Genome sequence of the deep-sea gamma-proteobacterium Idiomarina loihiensis reveals amino acid fermentation as a source of carbon and energy.</title>
        <authorList>
            <person name="Hou S."/>
            <person name="Saw J.H."/>
            <person name="Lee K.S."/>
            <person name="Freitas T.A."/>
            <person name="Belisle C."/>
            <person name="Kawarabayasi Y."/>
            <person name="Donachie S.P."/>
            <person name="Pikina A."/>
            <person name="Galperin M.Y."/>
            <person name="Koonin E.V."/>
            <person name="Makarova K.S."/>
            <person name="Omelchenko M.V."/>
            <person name="Sorokin A."/>
            <person name="Wolf Y.I."/>
            <person name="Li Q.X."/>
            <person name="Keum Y.S."/>
            <person name="Campbell S."/>
            <person name="Denery J."/>
            <person name="Aizawa S."/>
            <person name="Shibata S."/>
            <person name="Malahoff A."/>
            <person name="Alam M."/>
        </authorList>
    </citation>
    <scope>NUCLEOTIDE SEQUENCE [LARGE SCALE GENOMIC DNA]</scope>
    <source>
        <strain>ATCC BAA-735 / DSM 15497 / L2-TR</strain>
    </source>
</reference>
<accession>Q5QUN8</accession>
<gene>
    <name evidence="1" type="primary">tdh</name>
    <name type="ordered locus">IL0269</name>
</gene>
<name>TDH_IDILO</name>
<proteinExistence type="inferred from homology"/>
<feature type="chain" id="PRO_0000160842" description="L-threonine 3-dehydrogenase">
    <location>
        <begin position="1"/>
        <end position="341"/>
    </location>
</feature>
<feature type="active site" description="Charge relay system" evidence="1">
    <location>
        <position position="40"/>
    </location>
</feature>
<feature type="active site" description="Charge relay system" evidence="1">
    <location>
        <position position="43"/>
    </location>
</feature>
<feature type="binding site" evidence="1">
    <location>
        <position position="38"/>
    </location>
    <ligand>
        <name>Zn(2+)</name>
        <dbReference type="ChEBI" id="CHEBI:29105"/>
        <label>1</label>
        <note>catalytic</note>
    </ligand>
</feature>
<feature type="binding site" evidence="1">
    <location>
        <position position="63"/>
    </location>
    <ligand>
        <name>Zn(2+)</name>
        <dbReference type="ChEBI" id="CHEBI:29105"/>
        <label>1</label>
        <note>catalytic</note>
    </ligand>
</feature>
<feature type="binding site" evidence="1">
    <location>
        <position position="64"/>
    </location>
    <ligand>
        <name>Zn(2+)</name>
        <dbReference type="ChEBI" id="CHEBI:29105"/>
        <label>1</label>
        <note>catalytic</note>
    </ligand>
</feature>
<feature type="binding site" evidence="1">
    <location>
        <position position="93"/>
    </location>
    <ligand>
        <name>Zn(2+)</name>
        <dbReference type="ChEBI" id="CHEBI:29105"/>
        <label>2</label>
    </ligand>
</feature>
<feature type="binding site" evidence="1">
    <location>
        <position position="96"/>
    </location>
    <ligand>
        <name>Zn(2+)</name>
        <dbReference type="ChEBI" id="CHEBI:29105"/>
        <label>2</label>
    </ligand>
</feature>
<feature type="binding site" evidence="1">
    <location>
        <position position="99"/>
    </location>
    <ligand>
        <name>Zn(2+)</name>
        <dbReference type="ChEBI" id="CHEBI:29105"/>
        <label>2</label>
    </ligand>
</feature>
<feature type="binding site" evidence="1">
    <location>
        <position position="107"/>
    </location>
    <ligand>
        <name>Zn(2+)</name>
        <dbReference type="ChEBI" id="CHEBI:29105"/>
        <label>2</label>
    </ligand>
</feature>
<feature type="binding site" evidence="1">
    <location>
        <position position="175"/>
    </location>
    <ligand>
        <name>NAD(+)</name>
        <dbReference type="ChEBI" id="CHEBI:57540"/>
    </ligand>
</feature>
<feature type="binding site" evidence="1">
    <location>
        <position position="195"/>
    </location>
    <ligand>
        <name>NAD(+)</name>
        <dbReference type="ChEBI" id="CHEBI:57540"/>
    </ligand>
</feature>
<feature type="binding site" evidence="1">
    <location>
        <position position="200"/>
    </location>
    <ligand>
        <name>NAD(+)</name>
        <dbReference type="ChEBI" id="CHEBI:57540"/>
    </ligand>
</feature>
<feature type="binding site" evidence="1">
    <location>
        <begin position="262"/>
        <end position="264"/>
    </location>
    <ligand>
        <name>NAD(+)</name>
        <dbReference type="ChEBI" id="CHEBI:57540"/>
    </ligand>
</feature>
<feature type="binding site" evidence="1">
    <location>
        <begin position="286"/>
        <end position="287"/>
    </location>
    <ligand>
        <name>NAD(+)</name>
        <dbReference type="ChEBI" id="CHEBI:57540"/>
    </ligand>
</feature>
<feature type="site" description="Important for catalytic activity for the proton relay mechanism but does not participate directly in the coordination of zinc atom" evidence="1">
    <location>
        <position position="148"/>
    </location>
</feature>
<sequence length="341" mass="37314">MKALSKLHAKPGIWMTDVEKPECGYNDLLIKIKKTAICGTDVHIYKWDDWSQKTIPVPMVVGHEYVGEVAAMGDGVRGFEIGDRVSGEGHITCGHCRNCRAGRRHLCRNTYGVGVNRPGAFAEYLALPAENAFKLPDDVTDEMAAVFDPFGNAVHTALAFDLVGEDVLITGAGPIGIMAAAVARHVGARHVVITDVNEYRLDLARKMGVTRAVDVSKEKLSDVMTELGMKEGFDVGLEMSGVPSAFSQMLETMNHGGKIAMLGIPPENIAIDWNQVIFKGLVIKGIYGREMFETWYKMASLLQSGLDISPILTHEMPIDDFEKGFETMISGQSGKVILNWD</sequence>
<organism>
    <name type="scientific">Idiomarina loihiensis (strain ATCC BAA-735 / DSM 15497 / L2-TR)</name>
    <dbReference type="NCBI Taxonomy" id="283942"/>
    <lineage>
        <taxon>Bacteria</taxon>
        <taxon>Pseudomonadati</taxon>
        <taxon>Pseudomonadota</taxon>
        <taxon>Gammaproteobacteria</taxon>
        <taxon>Alteromonadales</taxon>
        <taxon>Idiomarinaceae</taxon>
        <taxon>Idiomarina</taxon>
    </lineage>
</organism>
<evidence type="ECO:0000255" key="1">
    <source>
        <dbReference type="HAMAP-Rule" id="MF_00627"/>
    </source>
</evidence>
<dbReference type="EC" id="1.1.1.103" evidence="1"/>
<dbReference type="EMBL" id="AE017340">
    <property type="protein sequence ID" value="AAV81112.1"/>
    <property type="molecule type" value="Genomic_DNA"/>
</dbReference>
<dbReference type="RefSeq" id="WP_011233531.1">
    <property type="nucleotide sequence ID" value="NC_006512.1"/>
</dbReference>
<dbReference type="SMR" id="Q5QUN8"/>
<dbReference type="STRING" id="283942.IL0269"/>
<dbReference type="GeneID" id="41335416"/>
<dbReference type="KEGG" id="ilo:IL0269"/>
<dbReference type="eggNOG" id="COG1063">
    <property type="taxonomic scope" value="Bacteria"/>
</dbReference>
<dbReference type="HOGENOM" id="CLU_026673_11_0_6"/>
<dbReference type="OrthoDB" id="9773078at2"/>
<dbReference type="UniPathway" id="UPA00046">
    <property type="reaction ID" value="UER00505"/>
</dbReference>
<dbReference type="Proteomes" id="UP000001171">
    <property type="component" value="Chromosome"/>
</dbReference>
<dbReference type="GO" id="GO:0005737">
    <property type="term" value="C:cytoplasm"/>
    <property type="evidence" value="ECO:0007669"/>
    <property type="project" value="UniProtKB-SubCell"/>
</dbReference>
<dbReference type="GO" id="GO:0008743">
    <property type="term" value="F:L-threonine 3-dehydrogenase activity"/>
    <property type="evidence" value="ECO:0007669"/>
    <property type="project" value="UniProtKB-UniRule"/>
</dbReference>
<dbReference type="GO" id="GO:0008270">
    <property type="term" value="F:zinc ion binding"/>
    <property type="evidence" value="ECO:0007669"/>
    <property type="project" value="UniProtKB-UniRule"/>
</dbReference>
<dbReference type="GO" id="GO:0019518">
    <property type="term" value="P:L-threonine catabolic process to glycine"/>
    <property type="evidence" value="ECO:0007669"/>
    <property type="project" value="UniProtKB-UniPathway"/>
</dbReference>
<dbReference type="Gene3D" id="3.90.180.10">
    <property type="entry name" value="Medium-chain alcohol dehydrogenases, catalytic domain"/>
    <property type="match status" value="1"/>
</dbReference>
<dbReference type="Gene3D" id="3.40.50.720">
    <property type="entry name" value="NAD(P)-binding Rossmann-like Domain"/>
    <property type="match status" value="1"/>
</dbReference>
<dbReference type="HAMAP" id="MF_00627">
    <property type="entry name" value="Thr_dehydrog"/>
    <property type="match status" value="1"/>
</dbReference>
<dbReference type="InterPro" id="IPR013149">
    <property type="entry name" value="ADH-like_C"/>
</dbReference>
<dbReference type="InterPro" id="IPR013154">
    <property type="entry name" value="ADH-like_N"/>
</dbReference>
<dbReference type="InterPro" id="IPR002328">
    <property type="entry name" value="ADH_Zn_CS"/>
</dbReference>
<dbReference type="InterPro" id="IPR011032">
    <property type="entry name" value="GroES-like_sf"/>
</dbReference>
<dbReference type="InterPro" id="IPR004627">
    <property type="entry name" value="L-Threonine_3-DHase"/>
</dbReference>
<dbReference type="InterPro" id="IPR036291">
    <property type="entry name" value="NAD(P)-bd_dom_sf"/>
</dbReference>
<dbReference type="InterPro" id="IPR020843">
    <property type="entry name" value="PKS_ER"/>
</dbReference>
<dbReference type="InterPro" id="IPR050129">
    <property type="entry name" value="Zn_alcohol_dh"/>
</dbReference>
<dbReference type="NCBIfam" id="NF003808">
    <property type="entry name" value="PRK05396.1"/>
    <property type="match status" value="1"/>
</dbReference>
<dbReference type="NCBIfam" id="TIGR00692">
    <property type="entry name" value="tdh"/>
    <property type="match status" value="1"/>
</dbReference>
<dbReference type="PANTHER" id="PTHR43401">
    <property type="entry name" value="L-THREONINE 3-DEHYDROGENASE"/>
    <property type="match status" value="1"/>
</dbReference>
<dbReference type="PANTHER" id="PTHR43401:SF2">
    <property type="entry name" value="L-THREONINE 3-DEHYDROGENASE"/>
    <property type="match status" value="1"/>
</dbReference>
<dbReference type="Pfam" id="PF08240">
    <property type="entry name" value="ADH_N"/>
    <property type="match status" value="1"/>
</dbReference>
<dbReference type="Pfam" id="PF00107">
    <property type="entry name" value="ADH_zinc_N"/>
    <property type="match status" value="1"/>
</dbReference>
<dbReference type="SMART" id="SM00829">
    <property type="entry name" value="PKS_ER"/>
    <property type="match status" value="1"/>
</dbReference>
<dbReference type="SUPFAM" id="SSF50129">
    <property type="entry name" value="GroES-like"/>
    <property type="match status" value="1"/>
</dbReference>
<dbReference type="SUPFAM" id="SSF51735">
    <property type="entry name" value="NAD(P)-binding Rossmann-fold domains"/>
    <property type="match status" value="1"/>
</dbReference>
<dbReference type="PROSITE" id="PS00059">
    <property type="entry name" value="ADH_ZINC"/>
    <property type="match status" value="1"/>
</dbReference>
<protein>
    <recommendedName>
        <fullName evidence="1">L-threonine 3-dehydrogenase</fullName>
        <shortName evidence="1">TDH</shortName>
        <ecNumber evidence="1">1.1.1.103</ecNumber>
    </recommendedName>
</protein>
<keyword id="KW-0963">Cytoplasm</keyword>
<keyword id="KW-0479">Metal-binding</keyword>
<keyword id="KW-0520">NAD</keyword>
<keyword id="KW-0560">Oxidoreductase</keyword>
<keyword id="KW-1185">Reference proteome</keyword>
<keyword id="KW-0862">Zinc</keyword>
<comment type="function">
    <text evidence="1">Catalyzes the NAD(+)-dependent oxidation of L-threonine to 2-amino-3-ketobutyrate.</text>
</comment>
<comment type="catalytic activity">
    <reaction evidence="1">
        <text>L-threonine + NAD(+) = (2S)-2-amino-3-oxobutanoate + NADH + H(+)</text>
        <dbReference type="Rhea" id="RHEA:13161"/>
        <dbReference type="ChEBI" id="CHEBI:15378"/>
        <dbReference type="ChEBI" id="CHEBI:57540"/>
        <dbReference type="ChEBI" id="CHEBI:57926"/>
        <dbReference type="ChEBI" id="CHEBI:57945"/>
        <dbReference type="ChEBI" id="CHEBI:78948"/>
        <dbReference type="EC" id="1.1.1.103"/>
    </reaction>
</comment>
<comment type="cofactor">
    <cofactor evidence="1">
        <name>Zn(2+)</name>
        <dbReference type="ChEBI" id="CHEBI:29105"/>
    </cofactor>
    <text evidence="1">Binds 2 Zn(2+) ions per subunit.</text>
</comment>
<comment type="pathway">
    <text evidence="1">Amino-acid degradation; L-threonine degradation via oxydo-reductase pathway; glycine from L-threonine: step 1/2.</text>
</comment>
<comment type="subunit">
    <text evidence="1">Homotetramer.</text>
</comment>
<comment type="subcellular location">
    <subcellularLocation>
        <location evidence="1">Cytoplasm</location>
    </subcellularLocation>
</comment>
<comment type="similarity">
    <text evidence="1">Belongs to the zinc-containing alcohol dehydrogenase family.</text>
</comment>